<dbReference type="EMBL" id="AE001273">
    <property type="protein sequence ID" value="AAC68181.1"/>
    <property type="molecule type" value="Genomic_DNA"/>
</dbReference>
<dbReference type="PIR" id="E71497">
    <property type="entry name" value="E71497"/>
</dbReference>
<dbReference type="RefSeq" id="NP_220094.1">
    <property type="nucleotide sequence ID" value="NC_000117.1"/>
</dbReference>
<dbReference type="STRING" id="272561.CT_579"/>
<dbReference type="EnsemblBacteria" id="AAC68181">
    <property type="protein sequence ID" value="AAC68181"/>
    <property type="gene ID" value="CT_579"/>
</dbReference>
<dbReference type="GeneID" id="884356"/>
<dbReference type="KEGG" id="ctr:CT_579"/>
<dbReference type="PATRIC" id="fig|272561.5.peg.631"/>
<dbReference type="HOGENOM" id="CLU_628059_0_0_0"/>
<dbReference type="InParanoid" id="O84583"/>
<dbReference type="OrthoDB" id="19220at2"/>
<dbReference type="Proteomes" id="UP000000431">
    <property type="component" value="Chromosome"/>
</dbReference>
<dbReference type="InterPro" id="IPR006972">
    <property type="entry name" value="BipB-like_C"/>
</dbReference>
<dbReference type="Pfam" id="PF04888">
    <property type="entry name" value="SseC"/>
    <property type="match status" value="1"/>
</dbReference>
<protein>
    <recommendedName>
        <fullName>Protein CT_579</fullName>
    </recommendedName>
</protein>
<sequence length="439" mass="44024">MTTGVRGDNAPDPSLLAQLTQNANSASAASTGKNGQVAGAKQENVDASFEDLLQDAQGTGGSKKATANQTSKSGKSEKAQASSGTSTTTSVAQASQTATAQAVHGARDSGFNSDGSATLPSPTGTEVNGVVLRKGMGTLALMGLIMTLLAQASAKSWSSSFQQQNQAIQNQVAMAPEIGNAIRTQANHQAQATELQAQQSLISGITNIVGFAVSVGGGILSASKSLGGLKSAAFTNETASATTSATSSLAKTATSALDDVAGTATAVGAKATSGAASAASSAATKLTQNMAESASKTLSQTASKSAGGLFGQALNTPSWSEKVSRGMNVVKTQGTRAAKFAGRALSSAMNISQMVHGLTAGIDGIVGGVIGAQVAQEQRMAGMAEARAEELKSLNSVQAQYASQAQQLQEQSQQSFNSALQTLQSISDSALQTTASMFN</sequence>
<comment type="similarity">
    <text evidence="2">Belongs to the chlamydial CPn_0808/CT_579/TC_0868 family.</text>
</comment>
<evidence type="ECO:0000256" key="1">
    <source>
        <dbReference type="SAM" id="MobiDB-lite"/>
    </source>
</evidence>
<evidence type="ECO:0000305" key="2"/>
<feature type="chain" id="PRO_0000218432" description="Protein CT_579">
    <location>
        <begin position="1"/>
        <end position="439"/>
    </location>
</feature>
<feature type="region of interest" description="Disordered" evidence="1">
    <location>
        <begin position="1"/>
        <end position="127"/>
    </location>
</feature>
<feature type="compositionally biased region" description="Low complexity" evidence="1">
    <location>
        <begin position="79"/>
        <end position="102"/>
    </location>
</feature>
<feature type="compositionally biased region" description="Polar residues" evidence="1">
    <location>
        <begin position="110"/>
        <end position="126"/>
    </location>
</feature>
<reference key="1">
    <citation type="journal article" date="1998" name="Science">
        <title>Genome sequence of an obligate intracellular pathogen of humans: Chlamydia trachomatis.</title>
        <authorList>
            <person name="Stephens R.S."/>
            <person name="Kalman S."/>
            <person name="Lammel C.J."/>
            <person name="Fan J."/>
            <person name="Marathe R."/>
            <person name="Aravind L."/>
            <person name="Mitchell W.P."/>
            <person name="Olinger L."/>
            <person name="Tatusov R.L."/>
            <person name="Zhao Q."/>
            <person name="Koonin E.V."/>
            <person name="Davis R.W."/>
        </authorList>
    </citation>
    <scope>NUCLEOTIDE SEQUENCE [LARGE SCALE GENOMIC DNA]</scope>
    <source>
        <strain>ATCC VR-885 / DSM 19411 / UW-3/Cx</strain>
    </source>
</reference>
<accession>O84583</accession>
<proteinExistence type="inferred from homology"/>
<organism>
    <name type="scientific">Chlamydia trachomatis serovar D (strain ATCC VR-885 / DSM 19411 / UW-3/Cx)</name>
    <dbReference type="NCBI Taxonomy" id="272561"/>
    <lineage>
        <taxon>Bacteria</taxon>
        <taxon>Pseudomonadati</taxon>
        <taxon>Chlamydiota</taxon>
        <taxon>Chlamydiia</taxon>
        <taxon>Chlamydiales</taxon>
        <taxon>Chlamydiaceae</taxon>
        <taxon>Chlamydia/Chlamydophila group</taxon>
        <taxon>Chlamydia</taxon>
    </lineage>
</organism>
<name>Y579_CHLTR</name>
<keyword id="KW-1185">Reference proteome</keyword>
<gene>
    <name type="ordered locus">CT_579</name>
</gene>